<dbReference type="EMBL" id="L33796">
    <property type="protein sequence ID" value="AAA58793.1"/>
    <property type="status" value="ALT_INIT"/>
    <property type="molecule type" value="Genomic_DNA"/>
</dbReference>
<dbReference type="EMBL" id="AE003852">
    <property type="protein sequence ID" value="AAF95865.1"/>
    <property type="molecule type" value="Genomic_DNA"/>
</dbReference>
<dbReference type="PIR" id="G82040">
    <property type="entry name" value="G82040"/>
</dbReference>
<dbReference type="PIR" id="PN0646">
    <property type="entry name" value="PN0646"/>
</dbReference>
<dbReference type="RefSeq" id="NP_232352.1">
    <property type="nucleotide sequence ID" value="NC_002505.1"/>
</dbReference>
<dbReference type="PDB" id="1W97">
    <property type="method" value="X-ray"/>
    <property type="resolution" value="2.70 A"/>
    <property type="chains" value="L=1-246"/>
</dbReference>
<dbReference type="PDB" id="1YF5">
    <property type="method" value="X-ray"/>
    <property type="resolution" value="2.75 A"/>
    <property type="chains" value="L=1-246"/>
</dbReference>
<dbReference type="PDB" id="2BH1">
    <property type="method" value="X-ray"/>
    <property type="resolution" value="2.40 A"/>
    <property type="chains" value="A/B=5-246"/>
</dbReference>
<dbReference type="PDBsum" id="1W97"/>
<dbReference type="PDBsum" id="1YF5"/>
<dbReference type="PDBsum" id="2BH1"/>
<dbReference type="SMR" id="P45782"/>
<dbReference type="IntAct" id="P45782">
    <property type="interactions" value="1"/>
</dbReference>
<dbReference type="STRING" id="243277.VC_2725"/>
<dbReference type="DNASU" id="2615553"/>
<dbReference type="EnsemblBacteria" id="AAF95865">
    <property type="protein sequence ID" value="AAF95865"/>
    <property type="gene ID" value="VC_2725"/>
</dbReference>
<dbReference type="KEGG" id="vch:VC_2725"/>
<dbReference type="PATRIC" id="fig|243277.26.peg.2600"/>
<dbReference type="eggNOG" id="COG3297">
    <property type="taxonomic scope" value="Bacteria"/>
</dbReference>
<dbReference type="HOGENOM" id="CLU_041016_2_1_6"/>
<dbReference type="EvolutionaryTrace" id="P45782"/>
<dbReference type="Proteomes" id="UP000000584">
    <property type="component" value="Chromosome 1"/>
</dbReference>
<dbReference type="GO" id="GO:0009276">
    <property type="term" value="C:Gram-negative-bacterium-type cell wall"/>
    <property type="evidence" value="ECO:0007669"/>
    <property type="project" value="InterPro"/>
</dbReference>
<dbReference type="GO" id="GO:0005886">
    <property type="term" value="C:plasma membrane"/>
    <property type="evidence" value="ECO:0007669"/>
    <property type="project" value="UniProtKB-SubCell"/>
</dbReference>
<dbReference type="GO" id="GO:0015627">
    <property type="term" value="C:type II protein secretion system complex"/>
    <property type="evidence" value="ECO:0007669"/>
    <property type="project" value="InterPro"/>
</dbReference>
<dbReference type="GO" id="GO:0015628">
    <property type="term" value="P:protein secretion by the type II secretion system"/>
    <property type="evidence" value="ECO:0007669"/>
    <property type="project" value="InterPro"/>
</dbReference>
<dbReference type="CDD" id="cd24017">
    <property type="entry name" value="ASKHA_T2SSL_N"/>
    <property type="match status" value="1"/>
</dbReference>
<dbReference type="FunFam" id="3.30.1360.100:FF:000003">
    <property type="entry name" value="Type II secretion system protein L"/>
    <property type="match status" value="1"/>
</dbReference>
<dbReference type="Gene3D" id="3.30.420.370">
    <property type="match status" value="1"/>
</dbReference>
<dbReference type="Gene3D" id="3.30.420.380">
    <property type="match status" value="1"/>
</dbReference>
<dbReference type="Gene3D" id="3.30.1360.100">
    <property type="entry name" value="General secretion pathway protein M, EpsM"/>
    <property type="match status" value="1"/>
</dbReference>
<dbReference type="InterPro" id="IPR043129">
    <property type="entry name" value="ATPase_NBD"/>
</dbReference>
<dbReference type="InterPro" id="IPR024230">
    <property type="entry name" value="GspL_cyto_dom"/>
</dbReference>
<dbReference type="InterPro" id="IPR025691">
    <property type="entry name" value="GspL_pp_dom"/>
</dbReference>
<dbReference type="InterPro" id="IPR007812">
    <property type="entry name" value="T2SS_protein-GspL"/>
</dbReference>
<dbReference type="NCBIfam" id="TIGR01709">
    <property type="entry name" value="typeII_sec_gspL"/>
    <property type="match status" value="1"/>
</dbReference>
<dbReference type="Pfam" id="PF12693">
    <property type="entry name" value="GspL_C"/>
    <property type="match status" value="1"/>
</dbReference>
<dbReference type="Pfam" id="PF05134">
    <property type="entry name" value="T2SSL"/>
    <property type="match status" value="1"/>
</dbReference>
<dbReference type="PIRSF" id="PIRSF015761">
    <property type="entry name" value="Protein_L"/>
    <property type="match status" value="1"/>
</dbReference>
<dbReference type="SUPFAM" id="SSF53067">
    <property type="entry name" value="Actin-like ATPase domain"/>
    <property type="match status" value="2"/>
</dbReference>
<feature type="chain" id="PRO_0000207319" description="Type II secretion system protein L">
    <location>
        <begin position="1"/>
        <end position="407"/>
    </location>
</feature>
<feature type="topological domain" description="Cytoplasmic" evidence="1">
    <location>
        <begin position="1"/>
        <end position="257"/>
    </location>
</feature>
<feature type="transmembrane region" description="Helical" evidence="3">
    <location>
        <begin position="258"/>
        <end position="275"/>
    </location>
</feature>
<feature type="topological domain" description="Periplasmic" evidence="1">
    <location>
        <begin position="276"/>
        <end position="407"/>
    </location>
</feature>
<feature type="sequence conflict" description="In Ref. 1; AAA58793." evidence="6" ref="1">
    <original>S</original>
    <variation>T</variation>
    <location>
        <position position="336"/>
    </location>
</feature>
<feature type="strand" evidence="7">
    <location>
        <begin position="7"/>
        <end position="13"/>
    </location>
</feature>
<feature type="strand" evidence="7">
    <location>
        <begin position="19"/>
        <end position="27"/>
    </location>
</feature>
<feature type="turn" evidence="7">
    <location>
        <begin position="28"/>
        <end position="31"/>
    </location>
</feature>
<feature type="strand" evidence="7">
    <location>
        <begin position="32"/>
        <end position="41"/>
    </location>
</feature>
<feature type="helix" evidence="7">
    <location>
        <begin position="42"/>
        <end position="48"/>
    </location>
</feature>
<feature type="helix" evidence="7">
    <location>
        <begin position="50"/>
        <end position="52"/>
    </location>
</feature>
<feature type="strand" evidence="7">
    <location>
        <begin position="55"/>
        <end position="61"/>
    </location>
</feature>
<feature type="helix" evidence="7">
    <location>
        <begin position="63"/>
        <end position="65"/>
    </location>
</feature>
<feature type="strand" evidence="7">
    <location>
        <begin position="66"/>
        <end position="72"/>
    </location>
</feature>
<feature type="helix" evidence="7">
    <location>
        <begin position="78"/>
        <end position="80"/>
    </location>
</feature>
<feature type="helix" evidence="7">
    <location>
        <begin position="81"/>
        <end position="89"/>
    </location>
</feature>
<feature type="helix" evidence="7">
    <location>
        <begin position="90"/>
        <end position="92"/>
    </location>
</feature>
<feature type="strand" evidence="7">
    <location>
        <begin position="93"/>
        <end position="95"/>
    </location>
</feature>
<feature type="helix" evidence="7">
    <location>
        <begin position="97"/>
        <end position="99"/>
    </location>
</feature>
<feature type="strand" evidence="7">
    <location>
        <begin position="100"/>
        <end position="107"/>
    </location>
</feature>
<feature type="strand" evidence="7">
    <location>
        <begin position="109"/>
        <end position="118"/>
    </location>
</feature>
<feature type="helix" evidence="7">
    <location>
        <begin position="119"/>
        <end position="131"/>
    </location>
</feature>
<feature type="strand" evidence="7">
    <location>
        <begin position="136"/>
        <end position="141"/>
    </location>
</feature>
<feature type="helix" evidence="7">
    <location>
        <begin position="142"/>
        <end position="145"/>
    </location>
</feature>
<feature type="strand" evidence="7">
    <location>
        <begin position="150"/>
        <end position="158"/>
    </location>
</feature>
<feature type="strand" evidence="7">
    <location>
        <begin position="161"/>
        <end position="167"/>
    </location>
</feature>
<feature type="strand" evidence="7">
    <location>
        <begin position="170"/>
        <end position="175"/>
    </location>
</feature>
<feature type="helix" evidence="7">
    <location>
        <begin position="176"/>
        <end position="178"/>
    </location>
</feature>
<feature type="helix" evidence="7">
    <location>
        <begin position="179"/>
        <end position="183"/>
    </location>
</feature>
<feature type="helix" evidence="7">
    <location>
        <begin position="186"/>
        <end position="188"/>
    </location>
</feature>
<feature type="strand" evidence="7">
    <location>
        <begin position="197"/>
        <end position="201"/>
    </location>
</feature>
<feature type="strand" evidence="7">
    <location>
        <begin position="214"/>
        <end position="216"/>
    </location>
</feature>
<feature type="helix" evidence="7">
    <location>
        <begin position="222"/>
        <end position="230"/>
    </location>
</feature>
<feature type="helix" evidence="7">
    <location>
        <begin position="240"/>
        <end position="242"/>
    </location>
</feature>
<evidence type="ECO:0000250" key="1">
    <source>
        <dbReference type="UniProtKB" id="P25060"/>
    </source>
</evidence>
<evidence type="ECO:0000250" key="2">
    <source>
        <dbReference type="UniProtKB" id="Q00514"/>
    </source>
</evidence>
<evidence type="ECO:0000255" key="3"/>
<evidence type="ECO:0000269" key="4">
    <source>
    </source>
</evidence>
<evidence type="ECO:0000269" key="5">
    <source>
    </source>
</evidence>
<evidence type="ECO:0000305" key="6"/>
<evidence type="ECO:0007829" key="7">
    <source>
        <dbReference type="PDB" id="2BH1"/>
    </source>
</evidence>
<gene>
    <name type="primary">epsL</name>
    <name type="ordered locus">VC_2725</name>
</gene>
<proteinExistence type="evidence at protein level"/>
<sequence length="407" mass="45749">MEGSVSEFLTVRLSSQKEADIPWLVWSAEQQEVIASGQVAGWEALHEIESYADQRSVVVLLAASDLILTSVEIPPGASRQLENMLPYLLEDEIAQDVEDVHFCVLSKGRETADVVGVDRLWLRACLDHLKACGFDVKRVLPDVLAIPRPEHGLAALQLGDEWLVRKSTTQGMAVDAQWLSLLAASDWVQNEGEYLPLQALTPLPELSLAETQEWRYEPSGLVMQLLTQEALTSKFNLLTGSFKLKSSWLRYWQIWRKVAIAAGLFVAVSISYSLFQAHQYEAQADAYRAESERIFRSIFPDKQKIPTVTYLKRQMSDEMARLSGGASVGSVLKWLSPLPEALKGVNLQLQSIKFDSNRSEIRLEATSRDFQSFEQARTQLEQYFAVEQGQLNKNGEQVFGVFVVKPK</sequence>
<reference key="1">
    <citation type="thesis" date="1994" institute="Michigan State University" country="United States">
        <title>Organization of the general secretion pathway genes in Vibrio cholerae.</title>
        <authorList>
            <person name="Overbye L.J."/>
        </authorList>
    </citation>
    <scope>NUCLEOTIDE SEQUENCE [GENOMIC DNA]</scope>
    <source>
        <strain>El Tor TRH7000</strain>
    </source>
</reference>
<reference key="2">
    <citation type="journal article" date="2000" name="Nature">
        <title>DNA sequence of both chromosomes of the cholera pathogen Vibrio cholerae.</title>
        <authorList>
            <person name="Heidelberg J.F."/>
            <person name="Eisen J.A."/>
            <person name="Nelson W.C."/>
            <person name="Clayton R.A."/>
            <person name="Gwinn M.L."/>
            <person name="Dodson R.J."/>
            <person name="Haft D.H."/>
            <person name="Hickey E.K."/>
            <person name="Peterson J.D."/>
            <person name="Umayam L.A."/>
            <person name="Gill S.R."/>
            <person name="Nelson K.E."/>
            <person name="Read T.D."/>
            <person name="Tettelin H."/>
            <person name="Richardson D.L."/>
            <person name="Ermolaeva M.D."/>
            <person name="Vamathevan J.J."/>
            <person name="Bass S."/>
            <person name="Qin H."/>
            <person name="Dragoi I."/>
            <person name="Sellers P."/>
            <person name="McDonald L.A."/>
            <person name="Utterback T.R."/>
            <person name="Fleischmann R.D."/>
            <person name="Nierman W.C."/>
            <person name="White O."/>
            <person name="Salzberg S.L."/>
            <person name="Smith H.O."/>
            <person name="Colwell R.R."/>
            <person name="Mekalanos J.J."/>
            <person name="Venter J.C."/>
            <person name="Fraser C.M."/>
        </authorList>
    </citation>
    <scope>NUCLEOTIDE SEQUENCE [LARGE SCALE GENOMIC DNA]</scope>
    <source>
        <strain>ATCC 39315 / El Tor Inaba N16961</strain>
    </source>
</reference>
<reference key="3">
    <citation type="journal article" date="2005" name="J. Mol. Biol.">
        <title>The X-ray structure of the type II secretion system complex formed by the N-terminal domain of EpsE and the cytoplasmic domain of EpsL of Vibrio cholerae.</title>
        <authorList>
            <person name="Abendroth J."/>
            <person name="Murphy P."/>
            <person name="Sandkvist M."/>
            <person name="Bagdasarian M."/>
            <person name="Hol W.G."/>
        </authorList>
    </citation>
    <scope>X-RAY CRYSTALLOGRAPHY (2.40 ANGSTROMS) OF 1-246</scope>
    <scope>INTERACTION WITH EPSE</scope>
</reference>
<reference key="4">
    <citation type="journal article" date="2004" name="J. Mol. Biol.">
        <title>The structure of the cytoplasmic domain of EpsL, an inner membrane component of the type II secretion system of Vibrio cholerae: an unusual member of the actin-like ATPase superfamily.</title>
        <authorList>
            <person name="Abendroth J."/>
            <person name="Bagdasarian M."/>
            <person name="Sandkvist M."/>
            <person name="Hol W.G."/>
        </authorList>
    </citation>
    <scope>X-RAY CRYSTALLOGRAPHY (2.70 ANGSTROMS) OF 1-246</scope>
    <scope>SUBUNIT</scope>
</reference>
<comment type="function">
    <text evidence="1">Inner membrane component of the type II secretion system required for the energy-dependent secretion of extracellular factors such as proteases and toxins from the periplasm. Plays a role in the complex assembly and recruits EpsM resulting in a stable complex in the inner membrane. Provides thus a link between the energy-providing EpsE protein in the cytoplasm and the rest of the T2SS machinery.</text>
</comment>
<comment type="subunit">
    <text evidence="2 4 5">Type II secretion system is composed of four main components: the outer membrane complex, the inner membrane complex, the cytoplasmic secretion ATPase and the periplasm-spanning pseudopilus (By similarity). Forms homodimers (PubMed:15533433). Interacts with EpsM/GspM. Interacts with EpsE/GspE and EpsF/GspF (PubMed:15843017).</text>
</comment>
<comment type="interaction">
    <interactant intactId="EBI-6400836">
        <id>P45782</id>
    </interactant>
    <interactant intactId="EBI-6400843">
        <id>P41851</id>
        <label>epsM</label>
    </interactant>
    <organismsDiffer>false</organismsDiffer>
    <experiments>2</experiments>
</comment>
<comment type="subcellular location">
    <subcellularLocation>
        <location evidence="1">Cell inner membrane</location>
        <topology evidence="1">Single-pass membrane protein</topology>
    </subcellularLocation>
</comment>
<comment type="similarity">
    <text evidence="6">Belongs to the GSP L family.</text>
</comment>
<comment type="sequence caution" evidence="6">
    <conflict type="erroneous initiation">
        <sequence resource="EMBL-CDS" id="AAA58793"/>
    </conflict>
    <text>Truncated N-terminus.</text>
</comment>
<accession>P45782</accession>
<accession>Q9KNK7</accession>
<organism>
    <name type="scientific">Vibrio cholerae serotype O1 (strain ATCC 39315 / El Tor Inaba N16961)</name>
    <dbReference type="NCBI Taxonomy" id="243277"/>
    <lineage>
        <taxon>Bacteria</taxon>
        <taxon>Pseudomonadati</taxon>
        <taxon>Pseudomonadota</taxon>
        <taxon>Gammaproteobacteria</taxon>
        <taxon>Vibrionales</taxon>
        <taxon>Vibrionaceae</taxon>
        <taxon>Vibrio</taxon>
    </lineage>
</organism>
<protein>
    <recommendedName>
        <fullName>Type II secretion system protein L</fullName>
        <shortName>T2SS protein L</shortName>
    </recommendedName>
    <alternativeName>
        <fullName>Cholera toxin secretion protein EpsL</fullName>
    </alternativeName>
    <alternativeName>
        <fullName>General secretion pathway protein L</fullName>
    </alternativeName>
</protein>
<keyword id="KW-0002">3D-structure</keyword>
<keyword id="KW-0997">Cell inner membrane</keyword>
<keyword id="KW-1003">Cell membrane</keyword>
<keyword id="KW-0472">Membrane</keyword>
<keyword id="KW-0653">Protein transport</keyword>
<keyword id="KW-1185">Reference proteome</keyword>
<keyword id="KW-0812">Transmembrane</keyword>
<keyword id="KW-1133">Transmembrane helix</keyword>
<keyword id="KW-0813">Transport</keyword>
<name>GSPL_VIBCH</name>